<gene>
    <name type="ordered locus">At1g31550</name>
    <name type="ORF">F27M3.22</name>
    <name type="ORF">T8E3.19</name>
</gene>
<keyword id="KW-0025">Alternative splicing</keyword>
<keyword id="KW-0325">Glycoprotein</keyword>
<keyword id="KW-0378">Hydrolase</keyword>
<keyword id="KW-0442">Lipid degradation</keyword>
<keyword id="KW-0443">Lipid metabolism</keyword>
<keyword id="KW-1185">Reference proteome</keyword>
<keyword id="KW-0964">Secreted</keyword>
<keyword id="KW-0732">Signal</keyword>
<proteinExistence type="evidence at transcript level"/>
<dbReference type="EC" id="3.1.1.-"/>
<dbReference type="EMBL" id="AC027135">
    <property type="protein sequence ID" value="AAG51269.1"/>
    <property type="molecule type" value="Genomic_DNA"/>
</dbReference>
<dbReference type="EMBL" id="AC074360">
    <property type="protein sequence ID" value="AAG60153.1"/>
    <property type="status" value="ALT_SEQ"/>
    <property type="molecule type" value="Genomic_DNA"/>
</dbReference>
<dbReference type="EMBL" id="CP002684">
    <property type="protein sequence ID" value="AEE31371.1"/>
    <property type="molecule type" value="Genomic_DNA"/>
</dbReference>
<dbReference type="EMBL" id="CP002684">
    <property type="protein sequence ID" value="AEE31372.1"/>
    <property type="molecule type" value="Genomic_DNA"/>
</dbReference>
<dbReference type="EMBL" id="BT015320">
    <property type="protein sequence ID" value="AAT99799.1"/>
    <property type="molecule type" value="mRNA"/>
</dbReference>
<dbReference type="EMBL" id="BT015719">
    <property type="protein sequence ID" value="AAU45217.1"/>
    <property type="molecule type" value="mRNA"/>
</dbReference>
<dbReference type="EMBL" id="AK221611">
    <property type="protein sequence ID" value="BAD95190.1"/>
    <property type="molecule type" value="mRNA"/>
</dbReference>
<dbReference type="RefSeq" id="NP_001031122.1">
    <molecule id="Q9C857-1"/>
    <property type="nucleotide sequence ID" value="NM_001036045.3"/>
</dbReference>
<dbReference type="RefSeq" id="NP_174440.2">
    <molecule id="Q9C857-2"/>
    <property type="nucleotide sequence ID" value="NM_102894.4"/>
</dbReference>
<dbReference type="SMR" id="Q9C857"/>
<dbReference type="FunCoup" id="Q9C857">
    <property type="interactions" value="179"/>
</dbReference>
<dbReference type="STRING" id="3702.Q9C857"/>
<dbReference type="GlyGen" id="Q9C857">
    <property type="glycosylation" value="3 sites"/>
</dbReference>
<dbReference type="PaxDb" id="3702-AT1G31550.2"/>
<dbReference type="ProteomicsDB" id="221966">
    <molecule id="Q9C857-1"/>
</dbReference>
<dbReference type="EnsemblPlants" id="AT1G31550.1">
    <molecule id="Q9C857-2"/>
    <property type="protein sequence ID" value="AT1G31550.1"/>
    <property type="gene ID" value="AT1G31550"/>
</dbReference>
<dbReference type="EnsemblPlants" id="AT1G31550.2">
    <molecule id="Q9C857-1"/>
    <property type="protein sequence ID" value="AT1G31550.2"/>
    <property type="gene ID" value="AT1G31550"/>
</dbReference>
<dbReference type="GeneID" id="840045"/>
<dbReference type="Gramene" id="AT1G31550.1">
    <molecule id="Q9C857-2"/>
    <property type="protein sequence ID" value="AT1G31550.1"/>
    <property type="gene ID" value="AT1G31550"/>
</dbReference>
<dbReference type="Gramene" id="AT1G31550.2">
    <molecule id="Q9C857-1"/>
    <property type="protein sequence ID" value="AT1G31550.2"/>
    <property type="gene ID" value="AT1G31550"/>
</dbReference>
<dbReference type="KEGG" id="ath:AT1G31550"/>
<dbReference type="Araport" id="AT1G31550"/>
<dbReference type="TAIR" id="AT1G31550"/>
<dbReference type="eggNOG" id="ENOG502QSMM">
    <property type="taxonomic scope" value="Eukaryota"/>
</dbReference>
<dbReference type="HOGENOM" id="CLU_015101_2_1_1"/>
<dbReference type="InParanoid" id="Q9C857"/>
<dbReference type="OMA" id="IPAMAFP"/>
<dbReference type="PhylomeDB" id="Q9C857"/>
<dbReference type="BioCyc" id="ARA:AT1G31550-MONOMER"/>
<dbReference type="PRO" id="PR:Q9C857"/>
<dbReference type="Proteomes" id="UP000006548">
    <property type="component" value="Chromosome 1"/>
</dbReference>
<dbReference type="ExpressionAtlas" id="Q9C857">
    <property type="expression patterns" value="baseline and differential"/>
</dbReference>
<dbReference type="GO" id="GO:0005576">
    <property type="term" value="C:extracellular region"/>
    <property type="evidence" value="ECO:0007669"/>
    <property type="project" value="UniProtKB-SubCell"/>
</dbReference>
<dbReference type="GO" id="GO:0000325">
    <property type="term" value="C:plant-type vacuole"/>
    <property type="evidence" value="ECO:0007005"/>
    <property type="project" value="TAIR"/>
</dbReference>
<dbReference type="GO" id="GO:0016788">
    <property type="term" value="F:hydrolase activity, acting on ester bonds"/>
    <property type="evidence" value="ECO:0007669"/>
    <property type="project" value="InterPro"/>
</dbReference>
<dbReference type="GO" id="GO:0016042">
    <property type="term" value="P:lipid catabolic process"/>
    <property type="evidence" value="ECO:0007669"/>
    <property type="project" value="UniProtKB-KW"/>
</dbReference>
<dbReference type="CDD" id="cd01837">
    <property type="entry name" value="SGNH_plant_lipase_like"/>
    <property type="match status" value="1"/>
</dbReference>
<dbReference type="FunFam" id="3.40.50.1110:FF:000024">
    <property type="entry name" value="GDSL esterase/lipase At1g31550"/>
    <property type="match status" value="1"/>
</dbReference>
<dbReference type="Gene3D" id="3.40.50.1110">
    <property type="entry name" value="SGNH hydrolase"/>
    <property type="match status" value="1"/>
</dbReference>
<dbReference type="InterPro" id="IPR001087">
    <property type="entry name" value="GDSL"/>
</dbReference>
<dbReference type="InterPro" id="IPR036514">
    <property type="entry name" value="SGNH_hydro_sf"/>
</dbReference>
<dbReference type="InterPro" id="IPR035669">
    <property type="entry name" value="SGNH_plant_lipase-like"/>
</dbReference>
<dbReference type="PANTHER" id="PTHR22835:SF678">
    <property type="entry name" value="SINAPINE ESTERASE"/>
    <property type="match status" value="1"/>
</dbReference>
<dbReference type="PANTHER" id="PTHR22835">
    <property type="entry name" value="ZINC FINGER FYVE DOMAIN CONTAINING PROTEIN"/>
    <property type="match status" value="1"/>
</dbReference>
<dbReference type="Pfam" id="PF00657">
    <property type="entry name" value="Lipase_GDSL"/>
    <property type="match status" value="1"/>
</dbReference>
<dbReference type="SUPFAM" id="SSF52266">
    <property type="entry name" value="SGNH hydrolase"/>
    <property type="match status" value="1"/>
</dbReference>
<accession>Q9C857</accession>
<accession>Q56XR2</accession>
<accession>Q68EB0</accession>
<accession>Q9C6U9</accession>
<evidence type="ECO:0000250" key="1"/>
<evidence type="ECO:0000255" key="2"/>
<evidence type="ECO:0000303" key="3">
    <source ref="3"/>
</evidence>
<evidence type="ECO:0000305" key="4"/>
<comment type="subcellular location">
    <subcellularLocation>
        <location evidence="4">Secreted</location>
    </subcellularLocation>
</comment>
<comment type="alternative products">
    <event type="alternative splicing"/>
    <isoform>
        <id>Q9C857-1</id>
        <name>1</name>
        <sequence type="displayed"/>
    </isoform>
    <isoform>
        <id>Q9C857-2</id>
        <name>2</name>
        <sequence type="described" ref="VSP_036691"/>
    </isoform>
</comment>
<comment type="similarity">
    <text evidence="4">Belongs to the 'GDSL' lipolytic enzyme family.</text>
</comment>
<comment type="sequence caution" evidence="4">
    <conflict type="erroneous gene model prediction">
        <sequence resource="EMBL-CDS" id="AAG60153"/>
    </conflict>
</comment>
<feature type="signal peptide" evidence="2">
    <location>
        <begin position="1"/>
        <end position="27"/>
    </location>
</feature>
<feature type="chain" id="PRO_0000367358" description="GDSL esterase/lipase At1g31550">
    <location>
        <begin position="28"/>
        <end position="394"/>
    </location>
</feature>
<feature type="active site" description="Nucleophile" evidence="1">
    <location>
        <position position="43"/>
    </location>
</feature>
<feature type="active site" evidence="1">
    <location>
        <position position="345"/>
    </location>
</feature>
<feature type="active site" evidence="1">
    <location>
        <position position="348"/>
    </location>
</feature>
<feature type="glycosylation site" description="N-linked (GlcNAc...) asparagine" evidence="2">
    <location>
        <position position="138"/>
    </location>
</feature>
<feature type="glycosylation site" description="N-linked (GlcNAc...) asparagine" evidence="2">
    <location>
        <position position="290"/>
    </location>
</feature>
<feature type="glycosylation site" description="N-linked (GlcNAc...) asparagine" evidence="2">
    <location>
        <position position="322"/>
    </location>
</feature>
<feature type="splice variant" id="VSP_036691" description="In isoform 2." evidence="3">
    <original>SKYG</original>
    <variation>R</variation>
    <location>
        <begin position="300"/>
        <end position="303"/>
    </location>
</feature>
<feature type="sequence conflict" description="In Ref. 4; BAD95190." evidence="4" ref="4">
    <original>K</original>
    <variation>R</variation>
    <location>
        <position position="111"/>
    </location>
</feature>
<reference key="1">
    <citation type="journal article" date="2000" name="Nature">
        <title>Sequence and analysis of chromosome 1 of the plant Arabidopsis thaliana.</title>
        <authorList>
            <person name="Theologis A."/>
            <person name="Ecker J.R."/>
            <person name="Palm C.J."/>
            <person name="Federspiel N.A."/>
            <person name="Kaul S."/>
            <person name="White O."/>
            <person name="Alonso J."/>
            <person name="Altafi H."/>
            <person name="Araujo R."/>
            <person name="Bowman C.L."/>
            <person name="Brooks S.Y."/>
            <person name="Buehler E."/>
            <person name="Chan A."/>
            <person name="Chao Q."/>
            <person name="Chen H."/>
            <person name="Cheuk R.F."/>
            <person name="Chin C.W."/>
            <person name="Chung M.K."/>
            <person name="Conn L."/>
            <person name="Conway A.B."/>
            <person name="Conway A.R."/>
            <person name="Creasy T.H."/>
            <person name="Dewar K."/>
            <person name="Dunn P."/>
            <person name="Etgu P."/>
            <person name="Feldblyum T.V."/>
            <person name="Feng J.-D."/>
            <person name="Fong B."/>
            <person name="Fujii C.Y."/>
            <person name="Gill J.E."/>
            <person name="Goldsmith A.D."/>
            <person name="Haas B."/>
            <person name="Hansen N.F."/>
            <person name="Hughes B."/>
            <person name="Huizar L."/>
            <person name="Hunter J.L."/>
            <person name="Jenkins J."/>
            <person name="Johnson-Hopson C."/>
            <person name="Khan S."/>
            <person name="Khaykin E."/>
            <person name="Kim C.J."/>
            <person name="Koo H.L."/>
            <person name="Kremenetskaia I."/>
            <person name="Kurtz D.B."/>
            <person name="Kwan A."/>
            <person name="Lam B."/>
            <person name="Langin-Hooper S."/>
            <person name="Lee A."/>
            <person name="Lee J.M."/>
            <person name="Lenz C.A."/>
            <person name="Li J.H."/>
            <person name="Li Y.-P."/>
            <person name="Lin X."/>
            <person name="Liu S.X."/>
            <person name="Liu Z.A."/>
            <person name="Luros J.S."/>
            <person name="Maiti R."/>
            <person name="Marziali A."/>
            <person name="Militscher J."/>
            <person name="Miranda M."/>
            <person name="Nguyen M."/>
            <person name="Nierman W.C."/>
            <person name="Osborne B.I."/>
            <person name="Pai G."/>
            <person name="Peterson J."/>
            <person name="Pham P.K."/>
            <person name="Rizzo M."/>
            <person name="Rooney T."/>
            <person name="Rowley D."/>
            <person name="Sakano H."/>
            <person name="Salzberg S.L."/>
            <person name="Schwartz J.R."/>
            <person name="Shinn P."/>
            <person name="Southwick A.M."/>
            <person name="Sun H."/>
            <person name="Tallon L.J."/>
            <person name="Tambunga G."/>
            <person name="Toriumi M.J."/>
            <person name="Town C.D."/>
            <person name="Utterback T."/>
            <person name="Van Aken S."/>
            <person name="Vaysberg M."/>
            <person name="Vysotskaia V.S."/>
            <person name="Walker M."/>
            <person name="Wu D."/>
            <person name="Yu G."/>
            <person name="Fraser C.M."/>
            <person name="Venter J.C."/>
            <person name="Davis R.W."/>
        </authorList>
    </citation>
    <scope>NUCLEOTIDE SEQUENCE [LARGE SCALE GENOMIC DNA]</scope>
    <source>
        <strain>cv. Columbia</strain>
    </source>
</reference>
<reference key="2">
    <citation type="journal article" date="2017" name="Plant J.">
        <title>Araport11: a complete reannotation of the Arabidopsis thaliana reference genome.</title>
        <authorList>
            <person name="Cheng C.Y."/>
            <person name="Krishnakumar V."/>
            <person name="Chan A.P."/>
            <person name="Thibaud-Nissen F."/>
            <person name="Schobel S."/>
            <person name="Town C.D."/>
        </authorList>
    </citation>
    <scope>GENOME REANNOTATION</scope>
    <source>
        <strain>cv. Columbia</strain>
    </source>
</reference>
<reference key="3">
    <citation type="submission" date="2004-09" db="EMBL/GenBank/DDBJ databases">
        <title>Arabidopsis ORF clones.</title>
        <authorList>
            <person name="Kim C.J."/>
            <person name="Chen H."/>
            <person name="Cheuk R.F."/>
            <person name="Shinn P."/>
            <person name="Ecker J.R."/>
        </authorList>
    </citation>
    <scope>NUCLEOTIDE SEQUENCE [LARGE SCALE MRNA] (ISOFORM 2)</scope>
    <source>
        <strain>cv. Columbia</strain>
    </source>
</reference>
<reference key="4">
    <citation type="submission" date="2005-03" db="EMBL/GenBank/DDBJ databases">
        <title>Large-scale analysis of RIKEN Arabidopsis full-length (RAFL) cDNAs.</title>
        <authorList>
            <person name="Totoki Y."/>
            <person name="Seki M."/>
            <person name="Ishida J."/>
            <person name="Nakajima M."/>
            <person name="Enju A."/>
            <person name="Kamiya A."/>
            <person name="Narusaka M."/>
            <person name="Shin-i T."/>
            <person name="Nakagawa M."/>
            <person name="Sakamoto N."/>
            <person name="Oishi K."/>
            <person name="Kohara Y."/>
            <person name="Kobayashi M."/>
            <person name="Toyoda A."/>
            <person name="Sakaki Y."/>
            <person name="Sakurai T."/>
            <person name="Iida K."/>
            <person name="Akiyama K."/>
            <person name="Satou M."/>
            <person name="Toyoda T."/>
            <person name="Konagaya A."/>
            <person name="Carninci P."/>
            <person name="Kawai J."/>
            <person name="Hayashizaki Y."/>
            <person name="Shinozaki K."/>
        </authorList>
    </citation>
    <scope>NUCLEOTIDE SEQUENCE [LARGE SCALE MRNA] (ISOFORM 1)</scope>
    <source>
        <strain>cv. Columbia</strain>
    </source>
</reference>
<reference key="5">
    <citation type="journal article" date="2004" name="Prog. Lipid Res.">
        <title>GDSL family of serine esterases/lipases.</title>
        <authorList>
            <person name="Akoh C.C."/>
            <person name="Lee G.-C."/>
            <person name="Liaw Y.-C."/>
            <person name="Huang T.-H."/>
            <person name="Shaw J.-F."/>
        </authorList>
    </citation>
    <scope>REVIEW</scope>
</reference>
<reference key="6">
    <citation type="journal article" date="2008" name="Pak. J. Biol. Sci.">
        <title>Sequence analysis of GDSL lipase gene family in Arabidopsis thaliana.</title>
        <authorList>
            <person name="Ling H."/>
        </authorList>
    </citation>
    <scope>GENE FAMILY</scope>
</reference>
<organism>
    <name type="scientific">Arabidopsis thaliana</name>
    <name type="common">Mouse-ear cress</name>
    <dbReference type="NCBI Taxonomy" id="3702"/>
    <lineage>
        <taxon>Eukaryota</taxon>
        <taxon>Viridiplantae</taxon>
        <taxon>Streptophyta</taxon>
        <taxon>Embryophyta</taxon>
        <taxon>Tracheophyta</taxon>
        <taxon>Spermatophyta</taxon>
        <taxon>Magnoliopsida</taxon>
        <taxon>eudicotyledons</taxon>
        <taxon>Gunneridae</taxon>
        <taxon>Pentapetalae</taxon>
        <taxon>rosids</taxon>
        <taxon>malvids</taxon>
        <taxon>Brassicales</taxon>
        <taxon>Brassicaceae</taxon>
        <taxon>Camelineae</taxon>
        <taxon>Arabidopsis</taxon>
    </lineage>
</organism>
<name>GDL16_ARATH</name>
<sequence length="394" mass="43376">MASLDSHVLMKLGSLFLSTLFVSIVSSESQCRNFESIISFGDSIADTGNLLGLSDHNNLPMSAFPPYGETFFHHPTGRFSDGRLIIDFIAEFLGLPYVPPYFGSTNGNFEKGVNFAVASATALESSFLEEKGYHCPHNFSLGVQLKIFKQSLPNLCGLPSDCRDMIGNALILMGEIGANDYNFPFFQLRPLDEVKELVPLVISTISSAITELIGMGGRTFLVPGGFPLGCSVAFLTLHQTSNMEEYDPLTGCLKWLNKFGEYHSEQLQEELNRLRKLNPHVNIIYADYYNASLRLGREPSKYGFINRHLSACCGVGGPYNFNLSRSCGSVGVEACSDPSKYVAWDGLHMTEAAHKSMADGLVKGPYAIPPFDWSCLSSMIKKKEVVGNTIFFDE</sequence>
<protein>
    <recommendedName>
        <fullName>GDSL esterase/lipase At1g31550</fullName>
        <ecNumber>3.1.1.-</ecNumber>
    </recommendedName>
    <alternativeName>
        <fullName>Extracellular lipase At1g31550</fullName>
    </alternativeName>
</protein>